<comment type="function">
    <text evidence="1">Histone chaperone that facilitates histone deposition and histone exchange and removal during nucleosome assembly and disassembly.</text>
</comment>
<comment type="subunit">
    <text evidence="1">Interacts with histone H3 and histone H4.</text>
</comment>
<comment type="subcellular location">
    <subcellularLocation>
        <location evidence="1">Nucleus</location>
    </subcellularLocation>
</comment>
<comment type="similarity">
    <text evidence="3">Belongs to the ASF1 family.</text>
</comment>
<name>ASF1_KLULA</name>
<proteinExistence type="inferred from homology"/>
<reference key="1">
    <citation type="journal article" date="2004" name="Nature">
        <title>Genome evolution in yeasts.</title>
        <authorList>
            <person name="Dujon B."/>
            <person name="Sherman D."/>
            <person name="Fischer G."/>
            <person name="Durrens P."/>
            <person name="Casaregola S."/>
            <person name="Lafontaine I."/>
            <person name="de Montigny J."/>
            <person name="Marck C."/>
            <person name="Neuveglise C."/>
            <person name="Talla E."/>
            <person name="Goffard N."/>
            <person name="Frangeul L."/>
            <person name="Aigle M."/>
            <person name="Anthouard V."/>
            <person name="Babour A."/>
            <person name="Barbe V."/>
            <person name="Barnay S."/>
            <person name="Blanchin S."/>
            <person name="Beckerich J.-M."/>
            <person name="Beyne E."/>
            <person name="Bleykasten C."/>
            <person name="Boisrame A."/>
            <person name="Boyer J."/>
            <person name="Cattolico L."/>
            <person name="Confanioleri F."/>
            <person name="de Daruvar A."/>
            <person name="Despons L."/>
            <person name="Fabre E."/>
            <person name="Fairhead C."/>
            <person name="Ferry-Dumazet H."/>
            <person name="Groppi A."/>
            <person name="Hantraye F."/>
            <person name="Hennequin C."/>
            <person name="Jauniaux N."/>
            <person name="Joyet P."/>
            <person name="Kachouri R."/>
            <person name="Kerrest A."/>
            <person name="Koszul R."/>
            <person name="Lemaire M."/>
            <person name="Lesur I."/>
            <person name="Ma L."/>
            <person name="Muller H."/>
            <person name="Nicaud J.-M."/>
            <person name="Nikolski M."/>
            <person name="Oztas S."/>
            <person name="Ozier-Kalogeropoulos O."/>
            <person name="Pellenz S."/>
            <person name="Potier S."/>
            <person name="Richard G.-F."/>
            <person name="Straub M.-L."/>
            <person name="Suleau A."/>
            <person name="Swennen D."/>
            <person name="Tekaia F."/>
            <person name="Wesolowski-Louvel M."/>
            <person name="Westhof E."/>
            <person name="Wirth B."/>
            <person name="Zeniou-Meyer M."/>
            <person name="Zivanovic Y."/>
            <person name="Bolotin-Fukuhara M."/>
            <person name="Thierry A."/>
            <person name="Bouchier C."/>
            <person name="Caudron B."/>
            <person name="Scarpelli C."/>
            <person name="Gaillardin C."/>
            <person name="Weissenbach J."/>
            <person name="Wincker P."/>
            <person name="Souciet J.-L."/>
        </authorList>
    </citation>
    <scope>NUCLEOTIDE SEQUENCE [LARGE SCALE GENOMIC DNA]</scope>
    <source>
        <strain>ATCC 8585 / CBS 2359 / DSM 70799 / NBRC 1267 / NRRL Y-1140 / WM37</strain>
    </source>
</reference>
<feature type="chain" id="PRO_0000284038" description="Histone chaperone ASF1">
    <location>
        <begin position="1"/>
        <end position="277"/>
    </location>
</feature>
<feature type="region of interest" description="Disordered" evidence="2">
    <location>
        <begin position="154"/>
        <end position="277"/>
    </location>
</feature>
<feature type="compositionally biased region" description="Acidic residues" evidence="2">
    <location>
        <begin position="155"/>
        <end position="207"/>
    </location>
</feature>
<feature type="compositionally biased region" description="Basic and acidic residues" evidence="2">
    <location>
        <begin position="219"/>
        <end position="230"/>
    </location>
</feature>
<feature type="compositionally biased region" description="Acidic residues" evidence="2">
    <location>
        <begin position="239"/>
        <end position="265"/>
    </location>
</feature>
<evidence type="ECO:0000250" key="1"/>
<evidence type="ECO:0000256" key="2">
    <source>
        <dbReference type="SAM" id="MobiDB-lite"/>
    </source>
</evidence>
<evidence type="ECO:0000305" key="3"/>
<protein>
    <recommendedName>
        <fullName>Histone chaperone ASF1</fullName>
    </recommendedName>
    <alternativeName>
        <fullName>Anti-silencing function protein 1</fullName>
    </alternativeName>
</protein>
<gene>
    <name type="primary">ASF1</name>
    <name type="ordered locus">KLLA0E14938g</name>
</gene>
<organism>
    <name type="scientific">Kluyveromyces lactis (strain ATCC 8585 / CBS 2359 / DSM 70799 / NBRC 1267 / NRRL Y-1140 / WM37)</name>
    <name type="common">Yeast</name>
    <name type="synonym">Candida sphaerica</name>
    <dbReference type="NCBI Taxonomy" id="284590"/>
    <lineage>
        <taxon>Eukaryota</taxon>
        <taxon>Fungi</taxon>
        <taxon>Dikarya</taxon>
        <taxon>Ascomycota</taxon>
        <taxon>Saccharomycotina</taxon>
        <taxon>Saccharomycetes</taxon>
        <taxon>Saccharomycetales</taxon>
        <taxon>Saccharomycetaceae</taxon>
        <taxon>Kluyveromyces</taxon>
    </lineage>
</organism>
<keyword id="KW-0143">Chaperone</keyword>
<keyword id="KW-0156">Chromatin regulator</keyword>
<keyword id="KW-0539">Nucleus</keyword>
<keyword id="KW-1185">Reference proteome</keyword>
<keyword id="KW-0804">Transcription</keyword>
<keyword id="KW-0805">Transcription regulation</keyword>
<accession>Q6CN69</accession>
<sequence length="277" mass="31534">MSIVSLLGIKVLNNPAKFTDPYEFEITFECLEPLKHDLEWKLTYVGSSRSLDHDQELDSILVGPIPVGINKFKFVADAPSPDLIPASELVSVTVILLSCSYNGKEFVRVGYYVNNEYDLEELRENPPQKVPIDHVVRNILAEKPRVTRFNIVWDNEGEEEFYPPEQEEPEEEEEEEEDEDEDEEADEDAEEDLAEEDDVDDGEGEETAPEKKKLKRDPKKSTASDVKNDEGESQAESLGPEEDEEDEEEAEEIDLEKESDSENDADLPTPQDTTQHK</sequence>
<dbReference type="EMBL" id="CR382125">
    <property type="protein sequence ID" value="CAG99707.1"/>
    <property type="molecule type" value="Genomic_DNA"/>
</dbReference>
<dbReference type="RefSeq" id="XP_454620.1">
    <property type="nucleotide sequence ID" value="XM_454620.1"/>
</dbReference>
<dbReference type="SMR" id="Q6CN69"/>
<dbReference type="FunCoup" id="Q6CN69">
    <property type="interactions" value="917"/>
</dbReference>
<dbReference type="STRING" id="284590.Q6CN69"/>
<dbReference type="PaxDb" id="284590-Q6CN69"/>
<dbReference type="KEGG" id="kla:KLLA0_E14895g"/>
<dbReference type="eggNOG" id="KOG3265">
    <property type="taxonomic scope" value="Eukaryota"/>
</dbReference>
<dbReference type="HOGENOM" id="CLU_060354_0_2_1"/>
<dbReference type="InParanoid" id="Q6CN69"/>
<dbReference type="OMA" id="CAEPVDI"/>
<dbReference type="Proteomes" id="UP000000598">
    <property type="component" value="Chromosome E"/>
</dbReference>
<dbReference type="GO" id="GO:0000785">
    <property type="term" value="C:chromatin"/>
    <property type="evidence" value="ECO:0007669"/>
    <property type="project" value="TreeGrafter"/>
</dbReference>
<dbReference type="GO" id="GO:0005634">
    <property type="term" value="C:nucleus"/>
    <property type="evidence" value="ECO:0007669"/>
    <property type="project" value="UniProtKB-SubCell"/>
</dbReference>
<dbReference type="GO" id="GO:0042393">
    <property type="term" value="F:histone binding"/>
    <property type="evidence" value="ECO:0007669"/>
    <property type="project" value="InterPro"/>
</dbReference>
<dbReference type="GO" id="GO:0006335">
    <property type="term" value="P:DNA replication-dependent chromatin assembly"/>
    <property type="evidence" value="ECO:0007669"/>
    <property type="project" value="TreeGrafter"/>
</dbReference>
<dbReference type="GO" id="GO:0006334">
    <property type="term" value="P:nucleosome assembly"/>
    <property type="evidence" value="ECO:0007669"/>
    <property type="project" value="InterPro"/>
</dbReference>
<dbReference type="GO" id="GO:0006337">
    <property type="term" value="P:nucleosome disassembly"/>
    <property type="evidence" value="ECO:0007669"/>
    <property type="project" value="InterPro"/>
</dbReference>
<dbReference type="FunFam" id="2.60.40.1490:FF:000001">
    <property type="entry name" value="Histone chaperone ASF1"/>
    <property type="match status" value="1"/>
</dbReference>
<dbReference type="Gene3D" id="2.60.40.1490">
    <property type="entry name" value="Histone chaperone ASF1-like"/>
    <property type="match status" value="1"/>
</dbReference>
<dbReference type="InterPro" id="IPR006818">
    <property type="entry name" value="ASF1-like"/>
</dbReference>
<dbReference type="InterPro" id="IPR036747">
    <property type="entry name" value="ASF1-like_sf"/>
</dbReference>
<dbReference type="InterPro" id="IPR017282">
    <property type="entry name" value="Hist_deposition_Asf1"/>
</dbReference>
<dbReference type="PANTHER" id="PTHR12040">
    <property type="entry name" value="ANTI-SILENCING PROTEIN 1"/>
    <property type="match status" value="1"/>
</dbReference>
<dbReference type="PANTHER" id="PTHR12040:SF0">
    <property type="entry name" value="HISTONE CHAPERONE ASF1"/>
    <property type="match status" value="1"/>
</dbReference>
<dbReference type="Pfam" id="PF04729">
    <property type="entry name" value="ASF1_hist_chap"/>
    <property type="match status" value="1"/>
</dbReference>
<dbReference type="PIRSF" id="PIRSF037759">
    <property type="entry name" value="Histone_Asf1"/>
    <property type="match status" value="1"/>
</dbReference>
<dbReference type="SUPFAM" id="SSF101546">
    <property type="entry name" value="ASF1-like"/>
    <property type="match status" value="1"/>
</dbReference>